<sequence>MKKLKINYLFIGILALLLAVALWPSIPWFGKADNRIAAIQARGELRVSTIHTPLTYNEINGKPFGLDYELAKQFADYLGVKLKVTVRQNISQLFDDLDNGNADLLAAGLVYNSERVKNYQPGPTYYSVSQQLVYKVGQYRPRTLGNLTAEQLTVAPGHVVVNDLQTLKETKFPELSWKVDDKKGSAELMEDVIEGKLDYTIADSVAISLFQRVHPELAVALDITDEQPVTWFRPLDGDNTLSAALLDFFNEMNEDGTLARIEEKYLGHGDDFDYVDTRTFLRAVDTVLPQLKPLFEKYAEEIDWRLLAAIAYQESHWDAQATSPTGVRGMMMLTKNTAQSLGITDRTDAEQSIRGGVRYLQDMMSKVPESVPENERIWFALAAYNMGYAHMLDARALTAKTKGNPDSWADVKQRLPLLSQKPYYSKLTYGYARGHEAYAYVENIRKYQISLVGYLQEKEKQATEATMQLAQDYPAVSPTELGKEKFPFLSFLSQSSSNYLTHSPSLLFSRKGSEEKQN</sequence>
<organism>
    <name type="scientific">Shigella dysenteriae serotype 1 (strain Sd197)</name>
    <dbReference type="NCBI Taxonomy" id="300267"/>
    <lineage>
        <taxon>Bacteria</taxon>
        <taxon>Pseudomonadati</taxon>
        <taxon>Pseudomonadota</taxon>
        <taxon>Gammaproteobacteria</taxon>
        <taxon>Enterobacterales</taxon>
        <taxon>Enterobacteriaceae</taxon>
        <taxon>Shigella</taxon>
    </lineage>
</organism>
<feature type="signal peptide" evidence="1">
    <location>
        <begin position="1"/>
        <end position="21"/>
    </location>
</feature>
<feature type="chain" id="PRO_0000353984" description="Membrane-bound lytic murein transglycosylase F">
    <location>
        <begin position="22"/>
        <end position="518"/>
    </location>
</feature>
<feature type="region of interest" description="Non-LT domain" evidence="1">
    <location>
        <begin position="22"/>
        <end position="269"/>
    </location>
</feature>
<feature type="region of interest" description="LT domain" evidence="1">
    <location>
        <begin position="270"/>
        <end position="518"/>
    </location>
</feature>
<feature type="active site" evidence="1">
    <location>
        <position position="314"/>
    </location>
</feature>
<reference key="1">
    <citation type="journal article" date="2005" name="Nucleic Acids Res.">
        <title>Genome dynamics and diversity of Shigella species, the etiologic agents of bacillary dysentery.</title>
        <authorList>
            <person name="Yang F."/>
            <person name="Yang J."/>
            <person name="Zhang X."/>
            <person name="Chen L."/>
            <person name="Jiang Y."/>
            <person name="Yan Y."/>
            <person name="Tang X."/>
            <person name="Wang J."/>
            <person name="Xiong Z."/>
            <person name="Dong J."/>
            <person name="Xue Y."/>
            <person name="Zhu Y."/>
            <person name="Xu X."/>
            <person name="Sun L."/>
            <person name="Chen S."/>
            <person name="Nie H."/>
            <person name="Peng J."/>
            <person name="Xu J."/>
            <person name="Wang Y."/>
            <person name="Yuan Z."/>
            <person name="Wen Y."/>
            <person name="Yao Z."/>
            <person name="Shen Y."/>
            <person name="Qiang B."/>
            <person name="Hou Y."/>
            <person name="Yu J."/>
            <person name="Jin Q."/>
        </authorList>
    </citation>
    <scope>NUCLEOTIDE SEQUENCE [LARGE SCALE GENOMIC DNA]</scope>
    <source>
        <strain>Sd197</strain>
    </source>
</reference>
<gene>
    <name evidence="1" type="primary">mltF</name>
    <name type="ordered locus">SDY_2748</name>
</gene>
<dbReference type="EC" id="4.2.2.n1" evidence="1"/>
<dbReference type="EMBL" id="CP000034">
    <property type="protein sequence ID" value="ABB62791.1"/>
    <property type="status" value="ALT_INIT"/>
    <property type="molecule type" value="Genomic_DNA"/>
</dbReference>
<dbReference type="RefSeq" id="WP_000734204.1">
    <property type="nucleotide sequence ID" value="NC_007606.1"/>
</dbReference>
<dbReference type="RefSeq" id="YP_404282.1">
    <property type="nucleotide sequence ID" value="NC_007606.1"/>
</dbReference>
<dbReference type="SMR" id="Q32D14"/>
<dbReference type="STRING" id="300267.SDY_2748"/>
<dbReference type="CAZy" id="GH23">
    <property type="family name" value="Glycoside Hydrolase Family 23"/>
</dbReference>
<dbReference type="EnsemblBacteria" id="ABB62791">
    <property type="protein sequence ID" value="ABB62791"/>
    <property type="gene ID" value="SDY_2748"/>
</dbReference>
<dbReference type="KEGG" id="sdy:SDY_2748"/>
<dbReference type="PATRIC" id="fig|300267.13.peg.3313"/>
<dbReference type="HOGENOM" id="CLU_027494_0_1_6"/>
<dbReference type="Proteomes" id="UP000002716">
    <property type="component" value="Chromosome"/>
</dbReference>
<dbReference type="GO" id="GO:0009279">
    <property type="term" value="C:cell outer membrane"/>
    <property type="evidence" value="ECO:0007669"/>
    <property type="project" value="UniProtKB-SubCell"/>
</dbReference>
<dbReference type="GO" id="GO:0008933">
    <property type="term" value="F:peptidoglycan lytic transglycosylase activity"/>
    <property type="evidence" value="ECO:0007669"/>
    <property type="project" value="UniProtKB-UniRule"/>
</dbReference>
<dbReference type="GO" id="GO:0016998">
    <property type="term" value="P:cell wall macromolecule catabolic process"/>
    <property type="evidence" value="ECO:0007669"/>
    <property type="project" value="UniProtKB-UniRule"/>
</dbReference>
<dbReference type="GO" id="GO:0071555">
    <property type="term" value="P:cell wall organization"/>
    <property type="evidence" value="ECO:0007669"/>
    <property type="project" value="UniProtKB-KW"/>
</dbReference>
<dbReference type="GO" id="GO:0009253">
    <property type="term" value="P:peptidoglycan catabolic process"/>
    <property type="evidence" value="ECO:0007669"/>
    <property type="project" value="TreeGrafter"/>
</dbReference>
<dbReference type="CDD" id="cd13403">
    <property type="entry name" value="MLTF-like"/>
    <property type="match status" value="1"/>
</dbReference>
<dbReference type="CDD" id="cd01009">
    <property type="entry name" value="PBP2_YfhD_N"/>
    <property type="match status" value="1"/>
</dbReference>
<dbReference type="FunFam" id="1.10.530.10:FF:000003">
    <property type="entry name" value="Membrane-bound lytic murein transglycosylase F"/>
    <property type="match status" value="1"/>
</dbReference>
<dbReference type="FunFam" id="3.40.190.10:FF:000051">
    <property type="entry name" value="Membrane-bound lytic murein transglycosylase F"/>
    <property type="match status" value="1"/>
</dbReference>
<dbReference type="Gene3D" id="1.10.530.10">
    <property type="match status" value="1"/>
</dbReference>
<dbReference type="Gene3D" id="3.40.190.10">
    <property type="entry name" value="Periplasmic binding protein-like II"/>
    <property type="match status" value="2"/>
</dbReference>
<dbReference type="HAMAP" id="MF_02016">
    <property type="entry name" value="MltF"/>
    <property type="match status" value="1"/>
</dbReference>
<dbReference type="InterPro" id="IPR023346">
    <property type="entry name" value="Lysozyme-like_dom_sf"/>
</dbReference>
<dbReference type="InterPro" id="IPR023703">
    <property type="entry name" value="MltF"/>
</dbReference>
<dbReference type="InterPro" id="IPR001638">
    <property type="entry name" value="Solute-binding_3/MltF_N"/>
</dbReference>
<dbReference type="InterPro" id="IPR000189">
    <property type="entry name" value="Transglyc_AS"/>
</dbReference>
<dbReference type="InterPro" id="IPR008258">
    <property type="entry name" value="Transglycosylase_SLT_dom_1"/>
</dbReference>
<dbReference type="NCBIfam" id="NF008112">
    <property type="entry name" value="PRK10859.1"/>
    <property type="match status" value="1"/>
</dbReference>
<dbReference type="PANTHER" id="PTHR35936">
    <property type="entry name" value="MEMBRANE-BOUND LYTIC MUREIN TRANSGLYCOSYLASE F"/>
    <property type="match status" value="1"/>
</dbReference>
<dbReference type="PANTHER" id="PTHR35936:SF32">
    <property type="entry name" value="MEMBRANE-BOUND LYTIC MUREIN TRANSGLYCOSYLASE F"/>
    <property type="match status" value="1"/>
</dbReference>
<dbReference type="Pfam" id="PF00497">
    <property type="entry name" value="SBP_bac_3"/>
    <property type="match status" value="1"/>
</dbReference>
<dbReference type="Pfam" id="PF01464">
    <property type="entry name" value="SLT"/>
    <property type="match status" value="1"/>
</dbReference>
<dbReference type="SMART" id="SM00062">
    <property type="entry name" value="PBPb"/>
    <property type="match status" value="1"/>
</dbReference>
<dbReference type="SUPFAM" id="SSF53955">
    <property type="entry name" value="Lysozyme-like"/>
    <property type="match status" value="1"/>
</dbReference>
<dbReference type="SUPFAM" id="SSF53850">
    <property type="entry name" value="Periplasmic binding protein-like II"/>
    <property type="match status" value="1"/>
</dbReference>
<dbReference type="PROSITE" id="PS00922">
    <property type="entry name" value="TRANSGLYCOSYLASE"/>
    <property type="match status" value="1"/>
</dbReference>
<comment type="function">
    <text evidence="1">Murein-degrading enzyme that degrades murein glycan strands and insoluble, high-molecular weight murein sacculi, with the concomitant formation of a 1,6-anhydromuramoyl product. Lytic transglycosylases (LTs) play an integral role in the metabolism of the peptidoglycan (PG) sacculus. Their lytic action creates space within the PG sacculus to allow for its expansion as well as for the insertion of various structures such as secretion systems and flagella.</text>
</comment>
<comment type="catalytic activity">
    <reaction evidence="1">
        <text>Exolytic cleavage of the (1-&gt;4)-beta-glycosidic linkage between N-acetylmuramic acid (MurNAc) and N-acetylglucosamine (GlcNAc) residues in peptidoglycan, from either the reducing or the non-reducing ends of the peptidoglycan chains, with concomitant formation of a 1,6-anhydrobond in the MurNAc residue.</text>
        <dbReference type="EC" id="4.2.2.n1"/>
    </reaction>
</comment>
<comment type="subcellular location">
    <subcellularLocation>
        <location>Cell outer membrane</location>
        <topology>Peripheral membrane protein</topology>
    </subcellularLocation>
    <text evidence="1">Attached to the inner leaflet of the outer membrane.</text>
</comment>
<comment type="domain">
    <text evidence="1">The N-terminal domain does not have lytic activity and probably modulates enzymatic activity. The C-terminal domain is the catalytic active domain.</text>
</comment>
<comment type="similarity">
    <text evidence="1">In the N-terminal section; belongs to the bacterial solute-binding protein 3 family.</text>
</comment>
<comment type="similarity">
    <text evidence="1">In the C-terminal section; belongs to the transglycosylase Slt family.</text>
</comment>
<comment type="sequence caution" evidence="2">
    <conflict type="erroneous initiation">
        <sequence resource="EMBL-CDS" id="ABB62791"/>
    </conflict>
</comment>
<evidence type="ECO:0000255" key="1">
    <source>
        <dbReference type="HAMAP-Rule" id="MF_02016"/>
    </source>
</evidence>
<evidence type="ECO:0000305" key="2"/>
<accession>Q32D14</accession>
<keyword id="KW-0998">Cell outer membrane</keyword>
<keyword id="KW-0961">Cell wall biogenesis/degradation</keyword>
<keyword id="KW-0456">Lyase</keyword>
<keyword id="KW-0472">Membrane</keyword>
<keyword id="KW-1185">Reference proteome</keyword>
<keyword id="KW-0732">Signal</keyword>
<proteinExistence type="inferred from homology"/>
<protein>
    <recommendedName>
        <fullName evidence="1">Membrane-bound lytic murein transglycosylase F</fullName>
        <ecNumber evidence="1">4.2.2.n1</ecNumber>
    </recommendedName>
    <alternativeName>
        <fullName evidence="1">Murein lyase F</fullName>
    </alternativeName>
</protein>
<name>MLTF_SHIDS</name>